<dbReference type="EC" id="6.1.1.14" evidence="1"/>
<dbReference type="EMBL" id="AM746676">
    <property type="protein sequence ID" value="CAN90602.1"/>
    <property type="molecule type" value="Genomic_DNA"/>
</dbReference>
<dbReference type="RefSeq" id="WP_012233080.1">
    <property type="nucleotide sequence ID" value="NC_010162.1"/>
</dbReference>
<dbReference type="SMR" id="A9GUD0"/>
<dbReference type="STRING" id="448385.sce0445"/>
<dbReference type="KEGG" id="scl:sce0445"/>
<dbReference type="eggNOG" id="COG0752">
    <property type="taxonomic scope" value="Bacteria"/>
</dbReference>
<dbReference type="HOGENOM" id="CLU_057066_1_0_7"/>
<dbReference type="OrthoDB" id="9802183at2"/>
<dbReference type="BioCyc" id="SCEL448385:SCE_RS02340-MONOMER"/>
<dbReference type="Proteomes" id="UP000002139">
    <property type="component" value="Chromosome"/>
</dbReference>
<dbReference type="GO" id="GO:0005829">
    <property type="term" value="C:cytosol"/>
    <property type="evidence" value="ECO:0007669"/>
    <property type="project" value="TreeGrafter"/>
</dbReference>
<dbReference type="GO" id="GO:0005524">
    <property type="term" value="F:ATP binding"/>
    <property type="evidence" value="ECO:0007669"/>
    <property type="project" value="UniProtKB-UniRule"/>
</dbReference>
<dbReference type="GO" id="GO:0004820">
    <property type="term" value="F:glycine-tRNA ligase activity"/>
    <property type="evidence" value="ECO:0007669"/>
    <property type="project" value="UniProtKB-UniRule"/>
</dbReference>
<dbReference type="GO" id="GO:0006426">
    <property type="term" value="P:glycyl-tRNA aminoacylation"/>
    <property type="evidence" value="ECO:0007669"/>
    <property type="project" value="UniProtKB-UniRule"/>
</dbReference>
<dbReference type="CDD" id="cd00733">
    <property type="entry name" value="GlyRS_alpha_core"/>
    <property type="match status" value="1"/>
</dbReference>
<dbReference type="FunFam" id="3.30.930.10:FF:000006">
    <property type="entry name" value="Glycine--tRNA ligase alpha subunit"/>
    <property type="match status" value="1"/>
</dbReference>
<dbReference type="Gene3D" id="3.30.930.10">
    <property type="entry name" value="Bira Bifunctional Protein, Domain 2"/>
    <property type="match status" value="1"/>
</dbReference>
<dbReference type="Gene3D" id="1.20.58.180">
    <property type="entry name" value="Class II aaRS and biotin synthetases, domain 2"/>
    <property type="match status" value="1"/>
</dbReference>
<dbReference type="HAMAP" id="MF_00254">
    <property type="entry name" value="Gly_tRNA_synth_alpha"/>
    <property type="match status" value="1"/>
</dbReference>
<dbReference type="InterPro" id="IPR045864">
    <property type="entry name" value="aa-tRNA-synth_II/BPL/LPL"/>
</dbReference>
<dbReference type="InterPro" id="IPR006194">
    <property type="entry name" value="Gly-tRNA-synth_heterodimer"/>
</dbReference>
<dbReference type="InterPro" id="IPR002310">
    <property type="entry name" value="Gly-tRNA_ligase_asu"/>
</dbReference>
<dbReference type="NCBIfam" id="TIGR00388">
    <property type="entry name" value="glyQ"/>
    <property type="match status" value="1"/>
</dbReference>
<dbReference type="NCBIfam" id="NF006827">
    <property type="entry name" value="PRK09348.1"/>
    <property type="match status" value="1"/>
</dbReference>
<dbReference type="PANTHER" id="PTHR30075:SF2">
    <property type="entry name" value="GLYCINE--TRNA LIGASE, CHLOROPLASTIC_MITOCHONDRIAL 2"/>
    <property type="match status" value="1"/>
</dbReference>
<dbReference type="PANTHER" id="PTHR30075">
    <property type="entry name" value="GLYCYL-TRNA SYNTHETASE"/>
    <property type="match status" value="1"/>
</dbReference>
<dbReference type="Pfam" id="PF02091">
    <property type="entry name" value="tRNA-synt_2e"/>
    <property type="match status" value="1"/>
</dbReference>
<dbReference type="PRINTS" id="PR01044">
    <property type="entry name" value="TRNASYNTHGA"/>
</dbReference>
<dbReference type="SUPFAM" id="SSF55681">
    <property type="entry name" value="Class II aaRS and biotin synthetases"/>
    <property type="match status" value="1"/>
</dbReference>
<dbReference type="PROSITE" id="PS50861">
    <property type="entry name" value="AA_TRNA_LIGASE_II_GLYAB"/>
    <property type="match status" value="1"/>
</dbReference>
<sequence>MTFQDLILTLQKFWADRGCLIVQPYNSEVGAGTFNPATFLRALGPEPWNVAFVEPSRRPADGRYGENPNRMQQFHQFQVILKPSPIDIQDLYLESLRAIGTNPLDHDVRFLEDDWESPTLGAWGLGWQVWIDGLEISQFTYFQQIGGIDCRPVSGELTYGLERIAMYLQDKDSIYDVVYSDRGGKIVRYGDIYQRAEWEWSTYNFEEADIAEHFAAFDVCEAEVKRLLYRGADPAAKGAAIDPKKALVLPAYDFVVKAAHRFNVLDARGAISVTERQRFIGRVRALARAVAETYVAQREALGYPLLGEQQAKAAE</sequence>
<name>SYGA_SORC5</name>
<reference key="1">
    <citation type="journal article" date="2007" name="Nat. Biotechnol.">
        <title>Complete genome sequence of the myxobacterium Sorangium cellulosum.</title>
        <authorList>
            <person name="Schneiker S."/>
            <person name="Perlova O."/>
            <person name="Kaiser O."/>
            <person name="Gerth K."/>
            <person name="Alici A."/>
            <person name="Altmeyer M.O."/>
            <person name="Bartels D."/>
            <person name="Bekel T."/>
            <person name="Beyer S."/>
            <person name="Bode E."/>
            <person name="Bode H.B."/>
            <person name="Bolten C.J."/>
            <person name="Choudhuri J.V."/>
            <person name="Doss S."/>
            <person name="Elnakady Y.A."/>
            <person name="Frank B."/>
            <person name="Gaigalat L."/>
            <person name="Goesmann A."/>
            <person name="Groeger C."/>
            <person name="Gross F."/>
            <person name="Jelsbak L."/>
            <person name="Jelsbak L."/>
            <person name="Kalinowski J."/>
            <person name="Kegler C."/>
            <person name="Knauber T."/>
            <person name="Konietzny S."/>
            <person name="Kopp M."/>
            <person name="Krause L."/>
            <person name="Krug D."/>
            <person name="Linke B."/>
            <person name="Mahmud T."/>
            <person name="Martinez-Arias R."/>
            <person name="McHardy A.C."/>
            <person name="Merai M."/>
            <person name="Meyer F."/>
            <person name="Mormann S."/>
            <person name="Munoz-Dorado J."/>
            <person name="Perez J."/>
            <person name="Pradella S."/>
            <person name="Rachid S."/>
            <person name="Raddatz G."/>
            <person name="Rosenau F."/>
            <person name="Rueckert C."/>
            <person name="Sasse F."/>
            <person name="Scharfe M."/>
            <person name="Schuster S.C."/>
            <person name="Suen G."/>
            <person name="Treuner-Lange A."/>
            <person name="Velicer G.J."/>
            <person name="Vorholter F.-J."/>
            <person name="Weissman K.J."/>
            <person name="Welch R.D."/>
            <person name="Wenzel S.C."/>
            <person name="Whitworth D.E."/>
            <person name="Wilhelm S."/>
            <person name="Wittmann C."/>
            <person name="Bloecker H."/>
            <person name="Puehler A."/>
            <person name="Mueller R."/>
        </authorList>
    </citation>
    <scope>NUCLEOTIDE SEQUENCE [LARGE SCALE GENOMIC DNA]</scope>
    <source>
        <strain>So ce56</strain>
    </source>
</reference>
<feature type="chain" id="PRO_1000101232" description="Glycine--tRNA ligase alpha subunit">
    <location>
        <begin position="1"/>
        <end position="315"/>
    </location>
</feature>
<keyword id="KW-0030">Aminoacyl-tRNA synthetase</keyword>
<keyword id="KW-0067">ATP-binding</keyword>
<keyword id="KW-0963">Cytoplasm</keyword>
<keyword id="KW-0436">Ligase</keyword>
<keyword id="KW-0547">Nucleotide-binding</keyword>
<keyword id="KW-0648">Protein biosynthesis</keyword>
<keyword id="KW-1185">Reference proteome</keyword>
<proteinExistence type="inferred from homology"/>
<evidence type="ECO:0000255" key="1">
    <source>
        <dbReference type="HAMAP-Rule" id="MF_00254"/>
    </source>
</evidence>
<gene>
    <name evidence="1" type="primary">glyQ</name>
    <name type="ordered locus">sce0445</name>
</gene>
<comment type="catalytic activity">
    <reaction evidence="1">
        <text>tRNA(Gly) + glycine + ATP = glycyl-tRNA(Gly) + AMP + diphosphate</text>
        <dbReference type="Rhea" id="RHEA:16013"/>
        <dbReference type="Rhea" id="RHEA-COMP:9664"/>
        <dbReference type="Rhea" id="RHEA-COMP:9683"/>
        <dbReference type="ChEBI" id="CHEBI:30616"/>
        <dbReference type="ChEBI" id="CHEBI:33019"/>
        <dbReference type="ChEBI" id="CHEBI:57305"/>
        <dbReference type="ChEBI" id="CHEBI:78442"/>
        <dbReference type="ChEBI" id="CHEBI:78522"/>
        <dbReference type="ChEBI" id="CHEBI:456215"/>
        <dbReference type="EC" id="6.1.1.14"/>
    </reaction>
</comment>
<comment type="subunit">
    <text evidence="1">Tetramer of two alpha and two beta subunits.</text>
</comment>
<comment type="subcellular location">
    <subcellularLocation>
        <location evidence="1">Cytoplasm</location>
    </subcellularLocation>
</comment>
<comment type="similarity">
    <text evidence="1">Belongs to the class-II aminoacyl-tRNA synthetase family.</text>
</comment>
<accession>A9GUD0</accession>
<organism>
    <name type="scientific">Sorangium cellulosum (strain So ce56)</name>
    <name type="common">Polyangium cellulosum (strain So ce56)</name>
    <dbReference type="NCBI Taxonomy" id="448385"/>
    <lineage>
        <taxon>Bacteria</taxon>
        <taxon>Pseudomonadati</taxon>
        <taxon>Myxococcota</taxon>
        <taxon>Polyangia</taxon>
        <taxon>Polyangiales</taxon>
        <taxon>Polyangiaceae</taxon>
        <taxon>Sorangium</taxon>
    </lineage>
</organism>
<protein>
    <recommendedName>
        <fullName evidence="1">Glycine--tRNA ligase alpha subunit</fullName>
        <ecNumber evidence="1">6.1.1.14</ecNumber>
    </recommendedName>
    <alternativeName>
        <fullName evidence="1">Glycyl-tRNA synthetase alpha subunit</fullName>
        <shortName evidence="1">GlyRS</shortName>
    </alternativeName>
</protein>